<organism>
    <name type="scientific">Human immunodeficiency virus type 1 group M subtype A (isolate Z321)</name>
    <name type="common">HIV-1</name>
    <dbReference type="NCBI Taxonomy" id="11692"/>
    <lineage>
        <taxon>Viruses</taxon>
        <taxon>Riboviria</taxon>
        <taxon>Pararnavirae</taxon>
        <taxon>Artverviricota</taxon>
        <taxon>Revtraviricetes</taxon>
        <taxon>Ortervirales</taxon>
        <taxon>Retroviridae</taxon>
        <taxon>Orthoretrovirinae</taxon>
        <taxon>Lentivirus</taxon>
        <taxon>Human immunodeficiency virus type 1</taxon>
    </lineage>
</organism>
<protein>
    <recommendedName>
        <fullName>Protein Rev</fullName>
    </recommendedName>
    <alternativeName>
        <fullName>ART/TRS</fullName>
    </alternativeName>
    <alternativeName>
        <fullName>Anti-repression transactivator</fullName>
    </alternativeName>
    <alternativeName>
        <fullName>Regulator of expression of viral proteins</fullName>
    </alternativeName>
</protein>
<sequence length="90" mass="10174">PYPPPEGTRQARKNRRRRWRARQRQIHSLGERILTTCLGRPTEPVPFLLPPIERLRIDCSEDRGDSDPQGVGDSQIPGKSCDLLGSGTKE</sequence>
<accession>P05868</accession>
<evidence type="ECO:0000250" key="1"/>
<evidence type="ECO:0000256" key="2">
    <source>
        <dbReference type="SAM" id="MobiDB-lite"/>
    </source>
</evidence>
<comment type="function">
    <text evidence="1">Escorts unspliced or incompletely spliced viral pre-mRNAs (late transcripts) out of the nucleus of infected cells. These pre-mRNAs carry a recognition sequence called Rev responsive element (RRE) located in the env gene, that is not present in fully spliced viral mRNAs (early transcripts). This function is essential since most viral proteins are translated from unspliced or partially spliced pre-mRNAs which cannot exit the nucleus by the pathway used by fully processed cellular mRNAs. Rev itself is translated from a fully spliced mRNA that readily exits the nucleus. Rev's nuclear localization signal (NLS) binds directly to KPNB1/Importin beta-1 without previous binding to KPNA1/Importin alpha-1. KPNB1 binds to the GDP bound form of RAN (Ran-GDP) and targets Rev to the nucleus. In the nucleus, the conversion from Ran-GDP to Ran-GTP dissociates Rev from KPNB1 and allows Rev's binding to the RRE in viral pre-mRNAs. Rev multimerization on the RRE via cooperative assembly exposes its nuclear export signal (NES) to the surface. Rev can then form a complex with XPO1/CRM1 and Ran-GTP, leading to nuclear export of the complex. Conversion from Ran-GTP to Ran-GDP mediates dissociation of the Rev/RRE/XPO1/RAN complex, so that Rev can return to the nucleus for a subsequent round of export. Beside KPNB1, also seems to interact with TNPO1/Transportin-1, RANBP5/IPO5 and IPO7/RANBP7 for nuclear import. The nucleoporin-like HRB/RIP is an essential cofactor that probably indirectly interacts with Rev to release HIV RNAs from the perinuclear region to the cytoplasm (By similarity).</text>
</comment>
<comment type="subunit">
    <text evidence="1">Homomultimer; when bound to the RRE. Multimeric assembly is essential for activity and may involve XPO1. Binds to human KPNB1, XPO1, TNPO1, RANBP5 and IPO7 (By similarity).</text>
</comment>
<comment type="subcellular location">
    <subcellularLocation>
        <location>Host nucleus</location>
        <location>Host nucleolus</location>
    </subcellularLocation>
    <subcellularLocation>
        <location>Host cytoplasm</location>
    </subcellularLocation>
    <text evidence="1">The presence of both nuclear import and nuclear export signals leads to continuous shuttling between the nucleus and cytoplasm.</text>
</comment>
<comment type="domain">
    <text evidence="1">The RNA-binding motif binds to the RRE, a 240 bp stem-and-loop structure present in incompletely spliced viral pre-mRNAs. This region also contains the NLS which mediates nuclear localization via KPNB1 binding and, when the N-terminal sequence is present, nucleolar targeting. These overlapping functions prevent Rev bound to RRE from undesirable return to the nucleus. When Rev binds the RRE, the NLS becomes masked while the NES remains accessible. The leucine-rich NES mediates binding to human XPO1 (By similarity).</text>
</comment>
<comment type="PTM">
    <text evidence="1">Phosphorylated by protein kinase CK2. Presence of, and maybe binding to the N-terminus of the regulatory beta subunit of CK2 is necessary for CK2-mediated Rev's phosphorylation (By similarity).</text>
</comment>
<comment type="PTM">
    <text evidence="1">Asymmetrically arginine dimethylated at one site by host PRMT6. Methylation impairs the RNA-binding activity and export of viral RNA from the nucleus to the cytoplasm (By similarity).</text>
</comment>
<comment type="miscellaneous">
    <text>HIV-1 lineages are divided in three main groups, M (for Major), O (for Outlier), and N (for New, or Non-M, Non-O). The vast majority of strains found worldwide belong to the group M. Group O seems to be endemic to and largely confined to Cameroon and neighboring countries in West Central Africa, where these viruses represent a small minority of HIV-1 strains. The group N is represented by a limited number of isolates from Cameroonian persons. The group M is further subdivided in 9 clades or subtypes (A to D, F to H, J and K).</text>
</comment>
<gene>
    <name type="primary">rev</name>
</gene>
<organismHost>
    <name type="scientific">Homo sapiens</name>
    <name type="common">Human</name>
    <dbReference type="NCBI Taxonomy" id="9606"/>
</organismHost>
<name>REV_HV1ZH</name>
<dbReference type="EMBL" id="M15896">
    <property type="protein sequence ID" value="AAB53950.1"/>
    <property type="molecule type" value="Genomic_RNA"/>
</dbReference>
<dbReference type="SASBDB" id="P05868"/>
<dbReference type="SMR" id="P05868"/>
<dbReference type="GO" id="GO:0030430">
    <property type="term" value="C:host cell cytoplasm"/>
    <property type="evidence" value="ECO:0007669"/>
    <property type="project" value="UniProtKB-SubCell"/>
</dbReference>
<dbReference type="GO" id="GO:0044196">
    <property type="term" value="C:host cell nucleolus"/>
    <property type="evidence" value="ECO:0007669"/>
    <property type="project" value="UniProtKB-SubCell"/>
</dbReference>
<dbReference type="GO" id="GO:0003700">
    <property type="term" value="F:DNA-binding transcription factor activity"/>
    <property type="evidence" value="ECO:0007669"/>
    <property type="project" value="InterPro"/>
</dbReference>
<dbReference type="GO" id="GO:0003723">
    <property type="term" value="F:RNA binding"/>
    <property type="evidence" value="ECO:0007669"/>
    <property type="project" value="UniProtKB-KW"/>
</dbReference>
<dbReference type="GO" id="GO:0051028">
    <property type="term" value="P:mRNA transport"/>
    <property type="evidence" value="ECO:0007669"/>
    <property type="project" value="UniProtKB-KW"/>
</dbReference>
<dbReference type="Gene3D" id="6.10.140.630">
    <property type="match status" value="1"/>
</dbReference>
<dbReference type="InterPro" id="IPR000625">
    <property type="entry name" value="REV_protein"/>
</dbReference>
<dbReference type="Pfam" id="PF00424">
    <property type="entry name" value="REV"/>
    <property type="match status" value="1"/>
</dbReference>
<reference key="1">
    <citation type="journal article" date="1989" name="AIDS Res. Hum. Retroviruses">
        <title>Molecular characterization of HIV-1 isolated from a serum collected in 1976: nucleotide sequence comparison to recent isolates and generation of hybrid HIV.</title>
        <authorList>
            <person name="Srinivasan A."/>
            <person name="York D."/>
            <person name="Butler D. Jr."/>
            <person name="Jannoun-Nasr R."/>
            <person name="Getchell J."/>
            <person name="McCormick J."/>
            <person name="Ou C.Y."/>
            <person name="Myers G."/>
            <person name="Smith T."/>
            <person name="Chen E."/>
        </authorList>
    </citation>
    <scope>NUCLEOTIDE SEQUENCE [GENOMIC RNA]</scope>
</reference>
<reference key="2">
    <citation type="journal article" date="1999" name="Arch. Biochem. Biophys.">
        <title>The ins and outs of HIV Rev.</title>
        <authorList>
            <person name="Hope T.J."/>
        </authorList>
    </citation>
    <scope>REVIEW</scope>
</reference>
<proteinExistence type="inferred from homology"/>
<keyword id="KW-0014">AIDS</keyword>
<keyword id="KW-1035">Host cytoplasm</keyword>
<keyword id="KW-1048">Host nucleus</keyword>
<keyword id="KW-0945">Host-virus interaction</keyword>
<keyword id="KW-0488">Methylation</keyword>
<keyword id="KW-0509">mRNA transport</keyword>
<keyword id="KW-0597">Phosphoprotein</keyword>
<keyword id="KW-0694">RNA-binding</keyword>
<keyword id="KW-0813">Transport</keyword>
<feature type="chain" id="PRO_0000085267" description="Protein Rev">
    <location>
        <begin position="1" status="less than"/>
        <end position="90"/>
    </location>
</feature>
<feature type="region of interest" description="Disordered" evidence="2">
    <location>
        <begin position="1"/>
        <end position="23"/>
    </location>
</feature>
<feature type="region of interest" description="Disordered" evidence="2">
    <location>
        <begin position="59"/>
        <end position="90"/>
    </location>
</feature>
<feature type="short sequence motif" description="Nuclear localization signal and RNA-binding (RRE)" evidence="1">
    <location>
        <begin position="8"/>
        <end position="24"/>
    </location>
</feature>
<feature type="short sequence motif" description="Nuclear export signal and binding to XPO1" evidence="1">
    <location>
        <begin position="47"/>
        <end position="58"/>
    </location>
</feature>
<feature type="compositionally biased region" description="Basic residues" evidence="2">
    <location>
        <begin position="10"/>
        <end position="23"/>
    </location>
</feature>
<feature type="modified residue" description="Phosphoserine; by host" evidence="1">
    <location>
        <position position="66"/>
    </location>
</feature>
<feature type="non-terminal residue">
    <location>
        <position position="1"/>
    </location>
</feature>